<accession>B6IVK5</accession>
<keyword id="KW-0378">Hydrolase</keyword>
<keyword id="KW-0460">Magnesium</keyword>
<keyword id="KW-0479">Metal-binding</keyword>
<keyword id="KW-0546">Nucleotide metabolism</keyword>
<keyword id="KW-0547">Nucleotide-binding</keyword>
<keyword id="KW-1185">Reference proteome</keyword>
<proteinExistence type="inferred from homology"/>
<organism>
    <name type="scientific">Rhodospirillum centenum (strain ATCC 51521 / SW)</name>
    <dbReference type="NCBI Taxonomy" id="414684"/>
    <lineage>
        <taxon>Bacteria</taxon>
        <taxon>Pseudomonadati</taxon>
        <taxon>Pseudomonadota</taxon>
        <taxon>Alphaproteobacteria</taxon>
        <taxon>Rhodospirillales</taxon>
        <taxon>Rhodospirillaceae</taxon>
        <taxon>Rhodospirillum</taxon>
    </lineage>
</organism>
<comment type="function">
    <text evidence="1">Pyrophosphatase that catalyzes the hydrolysis of nucleoside triphosphates to their monophosphate derivatives, with a high preference for the non-canonical purine nucleotides XTP (xanthosine triphosphate), dITP (deoxyinosine triphosphate) and ITP. Seems to function as a house-cleaning enzyme that removes non-canonical purine nucleotides from the nucleotide pool, thus preventing their incorporation into DNA/RNA and avoiding chromosomal lesions.</text>
</comment>
<comment type="catalytic activity">
    <reaction evidence="1">
        <text>XTP + H2O = XMP + diphosphate + H(+)</text>
        <dbReference type="Rhea" id="RHEA:28610"/>
        <dbReference type="ChEBI" id="CHEBI:15377"/>
        <dbReference type="ChEBI" id="CHEBI:15378"/>
        <dbReference type="ChEBI" id="CHEBI:33019"/>
        <dbReference type="ChEBI" id="CHEBI:57464"/>
        <dbReference type="ChEBI" id="CHEBI:61314"/>
        <dbReference type="EC" id="3.6.1.66"/>
    </reaction>
</comment>
<comment type="catalytic activity">
    <reaction evidence="1">
        <text>dITP + H2O = dIMP + diphosphate + H(+)</text>
        <dbReference type="Rhea" id="RHEA:28342"/>
        <dbReference type="ChEBI" id="CHEBI:15377"/>
        <dbReference type="ChEBI" id="CHEBI:15378"/>
        <dbReference type="ChEBI" id="CHEBI:33019"/>
        <dbReference type="ChEBI" id="CHEBI:61194"/>
        <dbReference type="ChEBI" id="CHEBI:61382"/>
        <dbReference type="EC" id="3.6.1.66"/>
    </reaction>
</comment>
<comment type="catalytic activity">
    <reaction evidence="1">
        <text>ITP + H2O = IMP + diphosphate + H(+)</text>
        <dbReference type="Rhea" id="RHEA:29399"/>
        <dbReference type="ChEBI" id="CHEBI:15377"/>
        <dbReference type="ChEBI" id="CHEBI:15378"/>
        <dbReference type="ChEBI" id="CHEBI:33019"/>
        <dbReference type="ChEBI" id="CHEBI:58053"/>
        <dbReference type="ChEBI" id="CHEBI:61402"/>
        <dbReference type="EC" id="3.6.1.66"/>
    </reaction>
</comment>
<comment type="cofactor">
    <cofactor evidence="1">
        <name>Mg(2+)</name>
        <dbReference type="ChEBI" id="CHEBI:18420"/>
    </cofactor>
    <text evidence="1">Binds 1 Mg(2+) ion per subunit.</text>
</comment>
<comment type="subunit">
    <text evidence="1">Homodimer.</text>
</comment>
<comment type="similarity">
    <text evidence="1">Belongs to the HAM1 NTPase family.</text>
</comment>
<name>IXTPA_RHOCS</name>
<evidence type="ECO:0000255" key="1">
    <source>
        <dbReference type="HAMAP-Rule" id="MF_01405"/>
    </source>
</evidence>
<protein>
    <recommendedName>
        <fullName evidence="1">dITP/XTP pyrophosphatase</fullName>
        <ecNumber evidence="1">3.6.1.66</ecNumber>
    </recommendedName>
    <alternativeName>
        <fullName evidence="1">Non-canonical purine NTP pyrophosphatase</fullName>
    </alternativeName>
    <alternativeName>
        <fullName evidence="1">Non-standard purine NTP pyrophosphatase</fullName>
    </alternativeName>
    <alternativeName>
        <fullName evidence="1">Nucleoside-triphosphate diphosphatase</fullName>
    </alternativeName>
    <alternativeName>
        <fullName evidence="1">Nucleoside-triphosphate pyrophosphatase</fullName>
        <shortName evidence="1">NTPase</shortName>
    </alternativeName>
</protein>
<gene>
    <name type="ordered locus">RC1_2961</name>
</gene>
<feature type="chain" id="PRO_1000145498" description="dITP/XTP pyrophosphatase">
    <location>
        <begin position="1"/>
        <end position="203"/>
    </location>
</feature>
<feature type="active site" description="Proton acceptor" evidence="1">
    <location>
        <position position="77"/>
    </location>
</feature>
<feature type="binding site" evidence="1">
    <location>
        <begin position="16"/>
        <end position="21"/>
    </location>
    <ligand>
        <name>substrate</name>
    </ligand>
</feature>
<feature type="binding site" evidence="1">
    <location>
        <position position="48"/>
    </location>
    <ligand>
        <name>Mg(2+)</name>
        <dbReference type="ChEBI" id="CHEBI:18420"/>
    </ligand>
</feature>
<feature type="binding site" evidence="1">
    <location>
        <position position="77"/>
    </location>
    <ligand>
        <name>Mg(2+)</name>
        <dbReference type="ChEBI" id="CHEBI:18420"/>
    </ligand>
</feature>
<feature type="binding site" evidence="1">
    <location>
        <position position="78"/>
    </location>
    <ligand>
        <name>substrate</name>
    </ligand>
</feature>
<feature type="binding site" evidence="1">
    <location>
        <begin position="161"/>
        <end position="164"/>
    </location>
    <ligand>
        <name>substrate</name>
    </ligand>
</feature>
<feature type="binding site" evidence="1">
    <location>
        <position position="184"/>
    </location>
    <ligand>
        <name>substrate</name>
    </ligand>
</feature>
<feature type="binding site" evidence="1">
    <location>
        <begin position="189"/>
        <end position="190"/>
    </location>
    <ligand>
        <name>substrate</name>
    </ligand>
</feature>
<reference key="1">
    <citation type="submission" date="2007-03" db="EMBL/GenBank/DDBJ databases">
        <title>Genome sequence of Rhodospirillum centenum.</title>
        <authorList>
            <person name="Touchman J.W."/>
            <person name="Bauer C."/>
            <person name="Blankenship R.E."/>
        </authorList>
    </citation>
    <scope>NUCLEOTIDE SEQUENCE [LARGE SCALE GENOMIC DNA]</scope>
    <source>
        <strain>ATCC 51521 / SW</strain>
    </source>
</reference>
<sequence>MTAPRRFAGDTLVIASHNRGKVREIADLLAAHVRHFPSAAELDLPEPEETEATFIGNAALKARAAALASGLPALADDSGLWVDALDGAPGIYSARWAGPEKDFGAAMERVRRELEAAADRRGDRARFVCALALAWPDGHVEAVEGTAHGTLTFPPRGGKGFGYDPVFIPDGHACTYAELDPAHKHAISHRADAFRQLLARCFA</sequence>
<dbReference type="EC" id="3.6.1.66" evidence="1"/>
<dbReference type="EMBL" id="CP000613">
    <property type="protein sequence ID" value="ACJ00329.1"/>
    <property type="molecule type" value="Genomic_DNA"/>
</dbReference>
<dbReference type="RefSeq" id="WP_012568109.1">
    <property type="nucleotide sequence ID" value="NC_011420.2"/>
</dbReference>
<dbReference type="SMR" id="B6IVK5"/>
<dbReference type="STRING" id="414684.RC1_2961"/>
<dbReference type="KEGG" id="rce:RC1_2961"/>
<dbReference type="eggNOG" id="COG0127">
    <property type="taxonomic scope" value="Bacteria"/>
</dbReference>
<dbReference type="HOGENOM" id="CLU_082080_0_0_5"/>
<dbReference type="OrthoDB" id="9807456at2"/>
<dbReference type="Proteomes" id="UP000001591">
    <property type="component" value="Chromosome"/>
</dbReference>
<dbReference type="GO" id="GO:0005829">
    <property type="term" value="C:cytosol"/>
    <property type="evidence" value="ECO:0007669"/>
    <property type="project" value="TreeGrafter"/>
</dbReference>
<dbReference type="GO" id="GO:0035870">
    <property type="term" value="F:dITP diphosphatase activity"/>
    <property type="evidence" value="ECO:0007669"/>
    <property type="project" value="RHEA"/>
</dbReference>
<dbReference type="GO" id="GO:0036220">
    <property type="term" value="F:ITP diphosphatase activity"/>
    <property type="evidence" value="ECO:0007669"/>
    <property type="project" value="UniProtKB-EC"/>
</dbReference>
<dbReference type="GO" id="GO:0046872">
    <property type="term" value="F:metal ion binding"/>
    <property type="evidence" value="ECO:0007669"/>
    <property type="project" value="UniProtKB-KW"/>
</dbReference>
<dbReference type="GO" id="GO:0000166">
    <property type="term" value="F:nucleotide binding"/>
    <property type="evidence" value="ECO:0007669"/>
    <property type="project" value="UniProtKB-KW"/>
</dbReference>
<dbReference type="GO" id="GO:0017111">
    <property type="term" value="F:ribonucleoside triphosphate phosphatase activity"/>
    <property type="evidence" value="ECO:0007669"/>
    <property type="project" value="InterPro"/>
</dbReference>
<dbReference type="GO" id="GO:0036222">
    <property type="term" value="F:XTP diphosphatase activity"/>
    <property type="evidence" value="ECO:0007669"/>
    <property type="project" value="RHEA"/>
</dbReference>
<dbReference type="GO" id="GO:0009117">
    <property type="term" value="P:nucleotide metabolic process"/>
    <property type="evidence" value="ECO:0007669"/>
    <property type="project" value="UniProtKB-KW"/>
</dbReference>
<dbReference type="GO" id="GO:0009146">
    <property type="term" value="P:purine nucleoside triphosphate catabolic process"/>
    <property type="evidence" value="ECO:0007669"/>
    <property type="project" value="UniProtKB-UniRule"/>
</dbReference>
<dbReference type="CDD" id="cd00515">
    <property type="entry name" value="HAM1"/>
    <property type="match status" value="1"/>
</dbReference>
<dbReference type="FunFam" id="3.90.950.10:FF:000001">
    <property type="entry name" value="dITP/XTP pyrophosphatase"/>
    <property type="match status" value="1"/>
</dbReference>
<dbReference type="Gene3D" id="3.90.950.10">
    <property type="match status" value="1"/>
</dbReference>
<dbReference type="HAMAP" id="MF_01405">
    <property type="entry name" value="Non_canon_purine_NTPase"/>
    <property type="match status" value="1"/>
</dbReference>
<dbReference type="InterPro" id="IPR020922">
    <property type="entry name" value="dITP/XTP_pyrophosphatase"/>
</dbReference>
<dbReference type="InterPro" id="IPR029001">
    <property type="entry name" value="ITPase-like_fam"/>
</dbReference>
<dbReference type="InterPro" id="IPR002637">
    <property type="entry name" value="RdgB/HAM1"/>
</dbReference>
<dbReference type="NCBIfam" id="TIGR00042">
    <property type="entry name" value="RdgB/HAM1 family non-canonical purine NTP pyrophosphatase"/>
    <property type="match status" value="1"/>
</dbReference>
<dbReference type="PANTHER" id="PTHR11067:SF9">
    <property type="entry name" value="INOSINE TRIPHOSPHATE PYROPHOSPHATASE"/>
    <property type="match status" value="1"/>
</dbReference>
<dbReference type="PANTHER" id="PTHR11067">
    <property type="entry name" value="INOSINE TRIPHOSPHATE PYROPHOSPHATASE/HAM1 PROTEIN"/>
    <property type="match status" value="1"/>
</dbReference>
<dbReference type="Pfam" id="PF01725">
    <property type="entry name" value="Ham1p_like"/>
    <property type="match status" value="1"/>
</dbReference>
<dbReference type="SUPFAM" id="SSF52972">
    <property type="entry name" value="ITPase-like"/>
    <property type="match status" value="1"/>
</dbReference>